<evidence type="ECO:0000255" key="1">
    <source>
        <dbReference type="HAMAP-Rule" id="MF_01166"/>
    </source>
</evidence>
<feature type="chain" id="PRO_1000137937" description="Bifunctional polymyxin resistance protein ArnA">
    <location>
        <begin position="1"/>
        <end position="660"/>
    </location>
</feature>
<feature type="region of interest" description="Formyltransferase ArnAFT">
    <location>
        <begin position="1"/>
        <end position="304"/>
    </location>
</feature>
<feature type="region of interest" description="Dehydrogenase ArnADH">
    <location>
        <begin position="314"/>
        <end position="660"/>
    </location>
</feature>
<feature type="active site" description="Proton donor; for formyltransferase activity" evidence="1">
    <location>
        <position position="104"/>
    </location>
</feature>
<feature type="active site" description="Proton acceptor; for decarboxylase activity" evidence="1">
    <location>
        <position position="434"/>
    </location>
</feature>
<feature type="active site" description="Proton donor; for decarboxylase activity" evidence="1">
    <location>
        <position position="619"/>
    </location>
</feature>
<feature type="binding site" evidence="1">
    <location>
        <begin position="86"/>
        <end position="88"/>
    </location>
    <ligand>
        <name>(6R)-10-formyltetrahydrofolate</name>
        <dbReference type="ChEBI" id="CHEBI:195366"/>
    </ligand>
</feature>
<feature type="binding site" evidence="1">
    <location>
        <position position="114"/>
    </location>
    <ligand>
        <name>(6R)-10-formyltetrahydrofolate</name>
        <dbReference type="ChEBI" id="CHEBI:195366"/>
    </ligand>
</feature>
<feature type="binding site" evidence="1">
    <location>
        <begin position="136"/>
        <end position="140"/>
    </location>
    <ligand>
        <name>(6R)-10-formyltetrahydrofolate</name>
        <dbReference type="ChEBI" id="CHEBI:195366"/>
    </ligand>
</feature>
<feature type="binding site" evidence="1">
    <location>
        <position position="347"/>
    </location>
    <ligand>
        <name>NAD(+)</name>
        <dbReference type="ChEBI" id="CHEBI:57540"/>
    </ligand>
</feature>
<feature type="binding site" evidence="1">
    <location>
        <begin position="368"/>
        <end position="369"/>
    </location>
    <ligand>
        <name>NAD(+)</name>
        <dbReference type="ChEBI" id="CHEBI:57540"/>
    </ligand>
</feature>
<feature type="binding site" evidence="1">
    <location>
        <position position="393"/>
    </location>
    <ligand>
        <name>UDP-alpha-D-glucuronate</name>
        <dbReference type="ChEBI" id="CHEBI:58052"/>
    </ligand>
</feature>
<feature type="binding site" evidence="1">
    <location>
        <position position="398"/>
    </location>
    <ligand>
        <name>UDP-alpha-D-glucuronate</name>
        <dbReference type="ChEBI" id="CHEBI:58052"/>
    </ligand>
</feature>
<feature type="binding site" evidence="1">
    <location>
        <begin position="432"/>
        <end position="433"/>
    </location>
    <ligand>
        <name>UDP-alpha-D-glucuronate</name>
        <dbReference type="ChEBI" id="CHEBI:58052"/>
    </ligand>
</feature>
<feature type="binding site" evidence="1">
    <location>
        <position position="460"/>
    </location>
    <ligand>
        <name>UDP-alpha-D-glucuronate</name>
        <dbReference type="ChEBI" id="CHEBI:58052"/>
    </ligand>
</feature>
<feature type="binding site" evidence="1">
    <location>
        <position position="492"/>
    </location>
    <ligand>
        <name>UDP-alpha-D-glucuronate</name>
        <dbReference type="ChEBI" id="CHEBI:58052"/>
    </ligand>
</feature>
<feature type="binding site" evidence="1">
    <location>
        <begin position="526"/>
        <end position="535"/>
    </location>
    <ligand>
        <name>UDP-alpha-D-glucuronate</name>
        <dbReference type="ChEBI" id="CHEBI:58052"/>
    </ligand>
</feature>
<feature type="binding site" evidence="1">
    <location>
        <position position="613"/>
    </location>
    <ligand>
        <name>UDP-alpha-D-glucuronate</name>
        <dbReference type="ChEBI" id="CHEBI:58052"/>
    </ligand>
</feature>
<feature type="site" description="Transition state stabilizer" evidence="1">
    <location>
        <position position="102"/>
    </location>
</feature>
<feature type="site" description="Raises pKa of active site His" evidence="1">
    <location>
        <position position="140"/>
    </location>
</feature>
<name>ARNA_ECODH</name>
<keyword id="KW-0046">Antibiotic resistance</keyword>
<keyword id="KW-0441">Lipid A biosynthesis</keyword>
<keyword id="KW-0444">Lipid biosynthesis</keyword>
<keyword id="KW-0443">Lipid metabolism</keyword>
<keyword id="KW-0448">Lipopolysaccharide biosynthesis</keyword>
<keyword id="KW-0511">Multifunctional enzyme</keyword>
<keyword id="KW-0520">NAD</keyword>
<keyword id="KW-0560">Oxidoreductase</keyword>
<keyword id="KW-0808">Transferase</keyword>
<comment type="function">
    <text evidence="1">Bifunctional enzyme that catalyzes the oxidative decarboxylation of UDP-glucuronic acid (UDP-GlcUA) to UDP-4-keto-arabinose (UDP-Ara4O) and the addition of a formyl group to UDP-4-amino-4-deoxy-L-arabinose (UDP-L-Ara4N) to form UDP-L-4-formamido-arabinose (UDP-L-Ara4FN). The modified arabinose is attached to lipid A and is required for resistance to polymyxin and cationic antimicrobial peptides.</text>
</comment>
<comment type="catalytic activity">
    <reaction evidence="1">
        <text>UDP-alpha-D-glucuronate + NAD(+) = UDP-beta-L-threo-pentopyranos-4-ulose + CO2 + NADH</text>
        <dbReference type="Rhea" id="RHEA:24702"/>
        <dbReference type="ChEBI" id="CHEBI:16526"/>
        <dbReference type="ChEBI" id="CHEBI:57540"/>
        <dbReference type="ChEBI" id="CHEBI:57945"/>
        <dbReference type="ChEBI" id="CHEBI:58052"/>
        <dbReference type="ChEBI" id="CHEBI:58710"/>
        <dbReference type="EC" id="1.1.1.305"/>
    </reaction>
</comment>
<comment type="catalytic activity">
    <reaction evidence="1">
        <text>UDP-4-amino-4-deoxy-beta-L-arabinose + (6R)-10-formyltetrahydrofolate = UDP-4-deoxy-4-formamido-beta-L-arabinose + (6S)-5,6,7,8-tetrahydrofolate + H(+)</text>
        <dbReference type="Rhea" id="RHEA:24706"/>
        <dbReference type="ChEBI" id="CHEBI:15378"/>
        <dbReference type="ChEBI" id="CHEBI:57453"/>
        <dbReference type="ChEBI" id="CHEBI:58708"/>
        <dbReference type="ChEBI" id="CHEBI:58709"/>
        <dbReference type="ChEBI" id="CHEBI:195366"/>
        <dbReference type="EC" id="2.1.2.13"/>
    </reaction>
</comment>
<comment type="pathway">
    <text evidence="1">Nucleotide-sugar biosynthesis; UDP-4-deoxy-4-formamido-beta-L-arabinose biosynthesis; UDP-4-deoxy-4-formamido-beta-L-arabinose from UDP-alpha-D-glucuronate: step 1/3.</text>
</comment>
<comment type="pathway">
    <text evidence="1">Nucleotide-sugar biosynthesis; UDP-4-deoxy-4-formamido-beta-L-arabinose biosynthesis; UDP-4-deoxy-4-formamido-beta-L-arabinose from UDP-alpha-D-glucuronate: step 3/3.</text>
</comment>
<comment type="pathway">
    <text evidence="1">Bacterial outer membrane biogenesis; lipopolysaccharide biosynthesis.</text>
</comment>
<comment type="subunit">
    <text evidence="1">Homohexamer, formed by a dimer of trimers.</text>
</comment>
<comment type="similarity">
    <text evidence="1">In the N-terminal section; belongs to the Fmt family. UDP-L-Ara4N formyltransferase subfamily.</text>
</comment>
<comment type="similarity">
    <text evidence="1">In the C-terminal section; belongs to the NAD(P)-dependent epimerase/dehydratase family. UDP-glucuronic acid decarboxylase subfamily.</text>
</comment>
<gene>
    <name evidence="1" type="primary">arnA</name>
    <name type="ordered locus">ECDH10B_2415</name>
</gene>
<organism>
    <name type="scientific">Escherichia coli (strain K12 / DH10B)</name>
    <dbReference type="NCBI Taxonomy" id="316385"/>
    <lineage>
        <taxon>Bacteria</taxon>
        <taxon>Pseudomonadati</taxon>
        <taxon>Pseudomonadota</taxon>
        <taxon>Gammaproteobacteria</taxon>
        <taxon>Enterobacterales</taxon>
        <taxon>Enterobacteriaceae</taxon>
        <taxon>Escherichia</taxon>
    </lineage>
</organism>
<proteinExistence type="inferred from homology"/>
<sequence length="660" mass="74289">MKTVVFAYHDMGCLGIEALLAAGYEISAIFTHTDNPGEKAFYGSVARLAAERGIPVYAPDNVNHPLWVERIAQLSPDVIFSFYYRHLIYDEILQLAPAGAFNLHGSLLPKYRGRAPLNWVLVNGETETGVTLHRMVKRADAGAIVAQLRIAIAPDDIAITLHHKLCHAARQLLEQTLPAIKHGNILEIAQRENEATCFGRRTPDDSFLEWHKPASVLHNMVRAVADPWPGAFSYVGNQKFTVWSSRVHPHASKAQPGSVISVAPLLIACGDGALEIVTGQAGDGITMQGSQLAQTLGLVQGSRLNSQPACTARRRTRVLILGVNGFIGNHLTERLLREDHYEVYGLDIGSDAISRFLNHPHFHFVEGDISIHSEWIEYHVKKCDVVLPLVAIATPIEYTRNPLRVFELDFEENLRIIRYCVKYRKRIIFPSTSEVYGMCSDKYFDEDHSNLIVGPVNKPRWIYSVSKQLLDRVIWAYGEKEGLQFTLFRPFNWMGPRLDNLNAARIGSSRAITQLILNLVEGSPIKLIDGGKQKRCFTDIRDGIEALYRIIENAGNRCDGEIINIGNPENEASIEELGEMLLASFEKHPLRHHFPPFAGFRVVESSSYYGKGYQDVEHRKPSIRNAHRCLDWEPKIDMQETIDETLDFFLRTVDLTDKPS</sequence>
<reference key="1">
    <citation type="journal article" date="2008" name="J. Bacteriol.">
        <title>The complete genome sequence of Escherichia coli DH10B: insights into the biology of a laboratory workhorse.</title>
        <authorList>
            <person name="Durfee T."/>
            <person name="Nelson R."/>
            <person name="Baldwin S."/>
            <person name="Plunkett G. III"/>
            <person name="Burland V."/>
            <person name="Mau B."/>
            <person name="Petrosino J.F."/>
            <person name="Qin X."/>
            <person name="Muzny D.M."/>
            <person name="Ayele M."/>
            <person name="Gibbs R.A."/>
            <person name="Csorgo B."/>
            <person name="Posfai G."/>
            <person name="Weinstock G.M."/>
            <person name="Blattner F.R."/>
        </authorList>
    </citation>
    <scope>NUCLEOTIDE SEQUENCE [LARGE SCALE GENOMIC DNA]</scope>
    <source>
        <strain>K12 / DH10B</strain>
    </source>
</reference>
<protein>
    <recommendedName>
        <fullName evidence="1">Bifunctional polymyxin resistance protein ArnA</fullName>
    </recommendedName>
    <domain>
        <recommendedName>
            <fullName evidence="1">UDP-4-amino-4-deoxy-L-arabinose formyltransferase</fullName>
            <ecNumber evidence="1">2.1.2.13</ecNumber>
        </recommendedName>
        <alternativeName>
            <fullName evidence="1">ArnAFT</fullName>
        </alternativeName>
        <alternativeName>
            <fullName evidence="1">UDP-L-Ara4N formyltransferase</fullName>
        </alternativeName>
    </domain>
    <domain>
        <recommendedName>
            <fullName evidence="1">UDP-glucuronic acid oxidase, UDP-4-keto-hexauronic acid decarboxylating</fullName>
            <ecNumber evidence="1">1.1.1.305</ecNumber>
        </recommendedName>
        <alternativeName>
            <fullName evidence="1">ArnADH</fullName>
        </alternativeName>
        <alternativeName>
            <fullName evidence="1">UDP-GlcUA decarboxylase</fullName>
        </alternativeName>
        <alternativeName>
            <fullName evidence="1">UDP-glucuronic acid dehydrogenase</fullName>
        </alternativeName>
    </domain>
</protein>
<accession>B1X8W8</accession>
<dbReference type="EC" id="2.1.2.13" evidence="1"/>
<dbReference type="EC" id="1.1.1.305" evidence="1"/>
<dbReference type="EMBL" id="CP000948">
    <property type="protein sequence ID" value="ACB03415.1"/>
    <property type="molecule type" value="Genomic_DNA"/>
</dbReference>
<dbReference type="RefSeq" id="WP_000860273.1">
    <property type="nucleotide sequence ID" value="NC_010473.1"/>
</dbReference>
<dbReference type="SMR" id="B1X8W8"/>
<dbReference type="KEGG" id="ecd:ECDH10B_2415"/>
<dbReference type="HOGENOM" id="CLU_007383_23_1_6"/>
<dbReference type="UniPathway" id="UPA00030"/>
<dbReference type="UniPathway" id="UPA00032">
    <property type="reaction ID" value="UER00492"/>
</dbReference>
<dbReference type="UniPathway" id="UPA00032">
    <property type="reaction ID" value="UER00494"/>
</dbReference>
<dbReference type="GO" id="GO:0016020">
    <property type="term" value="C:membrane"/>
    <property type="evidence" value="ECO:0007669"/>
    <property type="project" value="GOC"/>
</dbReference>
<dbReference type="GO" id="GO:0016831">
    <property type="term" value="F:carboxy-lyase activity"/>
    <property type="evidence" value="ECO:0007669"/>
    <property type="project" value="InterPro"/>
</dbReference>
<dbReference type="GO" id="GO:0099619">
    <property type="term" value="F:UDP-4-amino-4-deoxy-L-arabinose formyltransferase activity"/>
    <property type="evidence" value="ECO:0007669"/>
    <property type="project" value="UniProtKB-EC"/>
</dbReference>
<dbReference type="GO" id="GO:0099618">
    <property type="term" value="F:UDP-glucuronate dehydrogenase activity"/>
    <property type="evidence" value="ECO:0007669"/>
    <property type="project" value="UniProtKB-EC"/>
</dbReference>
<dbReference type="GO" id="GO:0009245">
    <property type="term" value="P:lipid A biosynthetic process"/>
    <property type="evidence" value="ECO:0007669"/>
    <property type="project" value="UniProtKB-KW"/>
</dbReference>
<dbReference type="GO" id="GO:0009103">
    <property type="term" value="P:lipopolysaccharide biosynthetic process"/>
    <property type="evidence" value="ECO:0007669"/>
    <property type="project" value="UniProtKB-UniRule"/>
</dbReference>
<dbReference type="GO" id="GO:0046677">
    <property type="term" value="P:response to antibiotic"/>
    <property type="evidence" value="ECO:0007669"/>
    <property type="project" value="UniProtKB-KW"/>
</dbReference>
<dbReference type="CDD" id="cd08702">
    <property type="entry name" value="Arna_FMT_C"/>
    <property type="match status" value="1"/>
</dbReference>
<dbReference type="CDD" id="cd05257">
    <property type="entry name" value="Arna_like_SDR_e"/>
    <property type="match status" value="1"/>
</dbReference>
<dbReference type="CDD" id="cd08644">
    <property type="entry name" value="FMT_core_ArnA_N"/>
    <property type="match status" value="1"/>
</dbReference>
<dbReference type="FunFam" id="3.40.50.12230:FF:000002">
    <property type="entry name" value="Bifunctional polymyxin resistance protein ArnA"/>
    <property type="match status" value="1"/>
</dbReference>
<dbReference type="FunFam" id="3.40.50.720:FF:000197">
    <property type="entry name" value="Bifunctional polymyxin resistance protein ArnA"/>
    <property type="match status" value="1"/>
</dbReference>
<dbReference type="Gene3D" id="3.40.50.12230">
    <property type="match status" value="1"/>
</dbReference>
<dbReference type="Gene3D" id="3.40.50.720">
    <property type="entry name" value="NAD(P)-binding Rossmann-like Domain"/>
    <property type="match status" value="1"/>
</dbReference>
<dbReference type="HAMAP" id="MF_01166">
    <property type="entry name" value="ArnA"/>
    <property type="match status" value="1"/>
</dbReference>
<dbReference type="InterPro" id="IPR045869">
    <property type="entry name" value="Arna-like_SDR_e"/>
</dbReference>
<dbReference type="InterPro" id="IPR021168">
    <property type="entry name" value="Bifun_polymyxin_resist_ArnA"/>
</dbReference>
<dbReference type="InterPro" id="IPR001509">
    <property type="entry name" value="Epimerase_deHydtase"/>
</dbReference>
<dbReference type="InterPro" id="IPR005793">
    <property type="entry name" value="Formyl_trans_C"/>
</dbReference>
<dbReference type="InterPro" id="IPR002376">
    <property type="entry name" value="Formyl_transf_N"/>
</dbReference>
<dbReference type="InterPro" id="IPR036477">
    <property type="entry name" value="Formyl_transf_N_sf"/>
</dbReference>
<dbReference type="InterPro" id="IPR011034">
    <property type="entry name" value="Formyl_transferase-like_C_sf"/>
</dbReference>
<dbReference type="InterPro" id="IPR050177">
    <property type="entry name" value="Lipid_A_modif_metabolic_enz"/>
</dbReference>
<dbReference type="InterPro" id="IPR036291">
    <property type="entry name" value="NAD(P)-bd_dom_sf"/>
</dbReference>
<dbReference type="NCBIfam" id="NF005414">
    <property type="entry name" value="PRK06988.1"/>
    <property type="match status" value="1"/>
</dbReference>
<dbReference type="NCBIfam" id="NF005998">
    <property type="entry name" value="PRK08125.1"/>
    <property type="match status" value="1"/>
</dbReference>
<dbReference type="NCBIfam" id="NF008872">
    <property type="entry name" value="PRK11908.1"/>
    <property type="match status" value="1"/>
</dbReference>
<dbReference type="PANTHER" id="PTHR43245">
    <property type="entry name" value="BIFUNCTIONAL POLYMYXIN RESISTANCE PROTEIN ARNA"/>
    <property type="match status" value="1"/>
</dbReference>
<dbReference type="PANTHER" id="PTHR43245:SF13">
    <property type="entry name" value="UDP-D-APIOSE_UDP-D-XYLOSE SYNTHASE 2"/>
    <property type="match status" value="1"/>
</dbReference>
<dbReference type="Pfam" id="PF01370">
    <property type="entry name" value="Epimerase"/>
    <property type="match status" value="1"/>
</dbReference>
<dbReference type="Pfam" id="PF02911">
    <property type="entry name" value="Formyl_trans_C"/>
    <property type="match status" value="1"/>
</dbReference>
<dbReference type="Pfam" id="PF00551">
    <property type="entry name" value="Formyl_trans_N"/>
    <property type="match status" value="1"/>
</dbReference>
<dbReference type="PIRSF" id="PIRSF036506">
    <property type="entry name" value="Bifun_polymyxin_resist_ArnA"/>
    <property type="match status" value="1"/>
</dbReference>
<dbReference type="SUPFAM" id="SSF50486">
    <property type="entry name" value="FMT C-terminal domain-like"/>
    <property type="match status" value="1"/>
</dbReference>
<dbReference type="SUPFAM" id="SSF53328">
    <property type="entry name" value="Formyltransferase"/>
    <property type="match status" value="1"/>
</dbReference>
<dbReference type="SUPFAM" id="SSF51735">
    <property type="entry name" value="NAD(P)-binding Rossmann-fold domains"/>
    <property type="match status" value="1"/>
</dbReference>